<accession>Q28740</accession>
<comment type="function">
    <text evidence="3">Signaling receptor for cyclophilins, essential for PPIA/CYPA and PPIB/CYPB-dependent signaling related to chemotaxis and adhesion of immune cells (By similarity). Plays an important role in targeting the monocarboxylate transporters SLC16A1/GLUT1, SLC16A3, SLC16A8, SLC16A11 and SLC16A12 to the plasma membrane (By similarity). Acts as a coreceptor for vascular endothelial growth factor receptor 2 (KDR/VEGFR2) in endothelial cells enhancing its VEGFA-mediated activation and downstream signaling (By similarity). Promotes angiogenesis through EPAS1/HIF2A-mediated up-regulation of VEGFA and KDR/VEGFR2 in endothelial cells (By similarity).</text>
</comment>
<comment type="subunit">
    <text evidence="1 2 3">Homooligomer (By similarity). Interacts with VEGFA, KDR/VEGFR2, PPIA/CYPA, SLC1A3, SLC16A12, SLC16A11, ATP1B2, MAG, L1CAM and AJAP1 (By similarity). Interacts with PPIL2; regulates BSG transport to the cell membrane (By similarity). Interacts with XKR8; promoting its localization at the cell membrane (By similarity). Interacts with SLC16A3; interaction mediates SLC16A3 targeting to the plasma membrane (By similarity). Interacts with SLC16A1; interaction mediates SLC16A1 targeting to the plasma membrane (By similarity). Interacts with SLC16A6; this interaction mediates targeting to the plasma membrane.</text>
</comment>
<comment type="subcellular location">
    <subcellularLocation>
        <location evidence="3">Cell membrane</location>
        <topology evidence="2">Single-pass type I membrane protein</topology>
    </subcellularLocation>
    <subcellularLocation>
        <location evidence="3">Endoplasmic reticulum membrane</location>
        <topology evidence="2">Single-pass type I membrane protein</topology>
    </subcellularLocation>
    <subcellularLocation>
        <location evidence="3">Basolateral cell membrane</location>
        <topology evidence="2">Single-pass type I membrane protein</topology>
    </subcellularLocation>
</comment>
<gene>
    <name type="primary">BSG</name>
</gene>
<keyword id="KW-0037">Angiogenesis</keyword>
<keyword id="KW-1003">Cell membrane</keyword>
<keyword id="KW-1015">Disulfide bond</keyword>
<keyword id="KW-0256">Endoplasmic reticulum</keyword>
<keyword id="KW-0325">Glycoprotein</keyword>
<keyword id="KW-0393">Immunoglobulin domain</keyword>
<keyword id="KW-0430">Lectin</keyword>
<keyword id="KW-0465">Mannose-binding</keyword>
<keyword id="KW-0472">Membrane</keyword>
<keyword id="KW-0597">Phosphoprotein</keyword>
<keyword id="KW-0675">Receptor</keyword>
<keyword id="KW-1185">Reference proteome</keyword>
<keyword id="KW-0732">Signal</keyword>
<keyword id="KW-0812">Transmembrane</keyword>
<keyword id="KW-1133">Transmembrane helix</keyword>
<feature type="signal peptide" evidence="4">
    <location>
        <begin position="1"/>
        <end position="21"/>
    </location>
</feature>
<feature type="chain" id="PRO_0000014520" description="Basigin">
    <location>
        <begin position="22"/>
        <end position="270"/>
    </location>
</feature>
<feature type="topological domain" description="Extracellular" evidence="2">
    <location>
        <begin position="22"/>
        <end position="207"/>
    </location>
</feature>
<feature type="transmembrane region" description="Helical" evidence="4">
    <location>
        <begin position="208"/>
        <end position="228"/>
    </location>
</feature>
<feature type="topological domain" description="Cytoplasmic" evidence="2">
    <location>
        <begin position="229"/>
        <end position="270"/>
    </location>
</feature>
<feature type="domain" description="Ig-like C2-type">
    <location>
        <begin position="22"/>
        <end position="103"/>
    </location>
</feature>
<feature type="domain" description="Ig-like V-type">
    <location>
        <begin position="105"/>
        <end position="203"/>
    </location>
</feature>
<feature type="region of interest" description="Disordered" evidence="6">
    <location>
        <begin position="239"/>
        <end position="270"/>
    </location>
</feature>
<feature type="modified residue" description="Phosphoserine" evidence="3">
    <location>
        <position position="252"/>
    </location>
</feature>
<feature type="glycosylation site" description="N-linked (GlcNAc...) asparagine" evidence="3">
    <location>
        <position position="44"/>
    </location>
</feature>
<feature type="glycosylation site" description="N-linked (GlcNAc...) asparagine" evidence="4">
    <location>
        <position position="75"/>
    </location>
</feature>
<feature type="glycosylation site" description="N-linked (GlcNAc...) asparagine" evidence="3">
    <location>
        <position position="152"/>
    </location>
</feature>
<feature type="glycosylation site" description="N-linked (GlcNAc...) asparagine" evidence="4">
    <location>
        <position position="186"/>
    </location>
</feature>
<feature type="disulfide bond" evidence="5">
    <location>
        <begin position="41"/>
        <end position="87"/>
    </location>
</feature>
<feature type="disulfide bond" evidence="5">
    <location>
        <begin position="126"/>
        <end position="185"/>
    </location>
</feature>
<organism>
    <name type="scientific">Oryctolagus cuniculus</name>
    <name type="common">Rabbit</name>
    <dbReference type="NCBI Taxonomy" id="9986"/>
    <lineage>
        <taxon>Eukaryota</taxon>
        <taxon>Metazoa</taxon>
        <taxon>Chordata</taxon>
        <taxon>Craniata</taxon>
        <taxon>Vertebrata</taxon>
        <taxon>Euteleostomi</taxon>
        <taxon>Mammalia</taxon>
        <taxon>Eutheria</taxon>
        <taxon>Euarchontoglires</taxon>
        <taxon>Glires</taxon>
        <taxon>Lagomorpha</taxon>
        <taxon>Leporidae</taxon>
        <taxon>Oryctolagus</taxon>
    </lineage>
</organism>
<proteinExistence type="evidence at transcript level"/>
<name>BASI_RABIT</name>
<dbReference type="EMBL" id="U62398">
    <property type="protein sequence ID" value="AAB04759.1"/>
    <property type="molecule type" value="mRNA"/>
</dbReference>
<dbReference type="PIR" id="S65739">
    <property type="entry name" value="S65739"/>
</dbReference>
<dbReference type="RefSeq" id="NP_001075843.1">
    <property type="nucleotide sequence ID" value="NM_001082374.2"/>
</dbReference>
<dbReference type="SMR" id="Q28740"/>
<dbReference type="FunCoup" id="Q28740">
    <property type="interactions" value="443"/>
</dbReference>
<dbReference type="GlyCosmos" id="Q28740">
    <property type="glycosylation" value="4 sites, No reported glycans"/>
</dbReference>
<dbReference type="GeneID" id="100009229"/>
<dbReference type="KEGG" id="ocu:100009229"/>
<dbReference type="CTD" id="682"/>
<dbReference type="InParanoid" id="Q28740"/>
<dbReference type="OrthoDB" id="5970915at2759"/>
<dbReference type="Proteomes" id="UP000001811">
    <property type="component" value="Unplaced"/>
</dbReference>
<dbReference type="GO" id="GO:0030424">
    <property type="term" value="C:axon"/>
    <property type="evidence" value="ECO:0007669"/>
    <property type="project" value="TreeGrafter"/>
</dbReference>
<dbReference type="GO" id="GO:0016323">
    <property type="term" value="C:basolateral plasma membrane"/>
    <property type="evidence" value="ECO:0007669"/>
    <property type="project" value="UniProtKB-SubCell"/>
</dbReference>
<dbReference type="GO" id="GO:0005789">
    <property type="term" value="C:endoplasmic reticulum membrane"/>
    <property type="evidence" value="ECO:0007669"/>
    <property type="project" value="UniProtKB-SubCell"/>
</dbReference>
<dbReference type="GO" id="GO:0005886">
    <property type="term" value="C:plasma membrane"/>
    <property type="evidence" value="ECO:0000250"/>
    <property type="project" value="UniProtKB"/>
</dbReference>
<dbReference type="GO" id="GO:0098632">
    <property type="term" value="F:cell-cell adhesion mediator activity"/>
    <property type="evidence" value="ECO:0007669"/>
    <property type="project" value="TreeGrafter"/>
</dbReference>
<dbReference type="GO" id="GO:0005537">
    <property type="term" value="F:D-mannose binding"/>
    <property type="evidence" value="ECO:0007669"/>
    <property type="project" value="UniProtKB-KW"/>
</dbReference>
<dbReference type="GO" id="GO:0038023">
    <property type="term" value="F:signaling receptor activity"/>
    <property type="evidence" value="ECO:0000250"/>
    <property type="project" value="UniProtKB"/>
</dbReference>
<dbReference type="GO" id="GO:0001525">
    <property type="term" value="P:angiogenesis"/>
    <property type="evidence" value="ECO:0007669"/>
    <property type="project" value="UniProtKB-KW"/>
</dbReference>
<dbReference type="GO" id="GO:0007411">
    <property type="term" value="P:axon guidance"/>
    <property type="evidence" value="ECO:0007669"/>
    <property type="project" value="TreeGrafter"/>
</dbReference>
<dbReference type="GO" id="GO:0070593">
    <property type="term" value="P:dendrite self-avoidance"/>
    <property type="evidence" value="ECO:0007669"/>
    <property type="project" value="TreeGrafter"/>
</dbReference>
<dbReference type="GO" id="GO:0061154">
    <property type="term" value="P:endothelial tube morphogenesis"/>
    <property type="evidence" value="ECO:0000250"/>
    <property type="project" value="UniProtKB"/>
</dbReference>
<dbReference type="GO" id="GO:0007156">
    <property type="term" value="P:homophilic cell adhesion via plasma membrane adhesion molecules"/>
    <property type="evidence" value="ECO:0007669"/>
    <property type="project" value="TreeGrafter"/>
</dbReference>
<dbReference type="GO" id="GO:0010595">
    <property type="term" value="P:positive regulation of endothelial cell migration"/>
    <property type="evidence" value="ECO:0000250"/>
    <property type="project" value="UniProtKB"/>
</dbReference>
<dbReference type="GO" id="GO:0010575">
    <property type="term" value="P:positive regulation of vascular endothelial growth factor production"/>
    <property type="evidence" value="ECO:0000250"/>
    <property type="project" value="UniProtKB"/>
</dbReference>
<dbReference type="GO" id="GO:0072659">
    <property type="term" value="P:protein localization to plasma membrane"/>
    <property type="evidence" value="ECO:0000250"/>
    <property type="project" value="UniProtKB"/>
</dbReference>
<dbReference type="FunFam" id="2.60.40.10:FF:001329">
    <property type="entry name" value="Basigin"/>
    <property type="match status" value="1"/>
</dbReference>
<dbReference type="FunFam" id="2.60.40.10:FF:000387">
    <property type="entry name" value="Neuroplastin b"/>
    <property type="match status" value="1"/>
</dbReference>
<dbReference type="Gene3D" id="2.60.40.10">
    <property type="entry name" value="Immunoglobulins"/>
    <property type="match status" value="2"/>
</dbReference>
<dbReference type="InterPro" id="IPR007110">
    <property type="entry name" value="Ig-like_dom"/>
</dbReference>
<dbReference type="InterPro" id="IPR036179">
    <property type="entry name" value="Ig-like_dom_sf"/>
</dbReference>
<dbReference type="InterPro" id="IPR013783">
    <property type="entry name" value="Ig-like_fold"/>
</dbReference>
<dbReference type="InterPro" id="IPR003599">
    <property type="entry name" value="Ig_sub"/>
</dbReference>
<dbReference type="PANTHER" id="PTHR10075:SF107">
    <property type="entry name" value="BASIGIN"/>
    <property type="match status" value="1"/>
</dbReference>
<dbReference type="PANTHER" id="PTHR10075">
    <property type="entry name" value="BASIGIN RELATED"/>
    <property type="match status" value="1"/>
</dbReference>
<dbReference type="Pfam" id="PF13927">
    <property type="entry name" value="Ig_3"/>
    <property type="match status" value="1"/>
</dbReference>
<dbReference type="PRINTS" id="PR01856">
    <property type="entry name" value="BASIGIN"/>
</dbReference>
<dbReference type="SMART" id="SM00409">
    <property type="entry name" value="IG"/>
    <property type="match status" value="2"/>
</dbReference>
<dbReference type="SUPFAM" id="SSF48726">
    <property type="entry name" value="Immunoglobulin"/>
    <property type="match status" value="1"/>
</dbReference>
<dbReference type="PROSITE" id="PS50835">
    <property type="entry name" value="IG_LIKE"/>
    <property type="match status" value="1"/>
</dbReference>
<protein>
    <recommendedName>
        <fullName>Basigin</fullName>
    </recommendedName>
    <cdAntigenName>CD147</cdAntigenName>
</protein>
<reference key="1">
    <citation type="journal article" date="1996" name="Biochim. Biophys. Acta">
        <title>Cloning of the rabbit homologue of mouse 'basigin' and rat 'OX-47': kidney cell type-specific expression, and regulation in collecting duct cells.</title>
        <authorList>
            <person name="Schuster V.L."/>
            <person name="Lu R."/>
            <person name="Kanai N."/>
            <person name="Bao Y."/>
            <person name="Rosenberg S."/>
            <person name="Prie D."/>
            <person name="Ronco P."/>
            <person name="Jennings M.L."/>
        </authorList>
    </citation>
    <scope>NUCLEOTIDE SEQUENCE [MRNA]</scope>
    <source>
        <tissue>Kidney</tissue>
    </source>
</reference>
<sequence length="270" mass="29078">MAAVLFALLALALLRAGGASAAAGTVTTSVQSGDSWVQLTCTLNTSAAGVTGHRWLKGKEVVKEDQLQGLHTEHNVTGDDRFGKYSCLFLPKDTGEATLTVDGPPRIKAVKKSEHANEGDSVTLLCKSESFPFVTAWVWYKVADSGDQVIQNGSQSRFFISHSEAQSELHIKDLDLTSDPGEYACNGTSLQGTDAAVVTLRVRSRLAALWPFLGIVAEVLVLVTVIFIYEKRRKPDEVLDDEDAGAAPLKSSGHHVNDDKGKNVRQRNAS</sequence>
<evidence type="ECO:0000250" key="1">
    <source>
        <dbReference type="UniProtKB" id="P18572"/>
    </source>
</evidence>
<evidence type="ECO:0000250" key="2">
    <source>
        <dbReference type="UniProtKB" id="P26453"/>
    </source>
</evidence>
<evidence type="ECO:0000250" key="3">
    <source>
        <dbReference type="UniProtKB" id="P35613"/>
    </source>
</evidence>
<evidence type="ECO:0000255" key="4"/>
<evidence type="ECO:0000255" key="5">
    <source>
        <dbReference type="PROSITE-ProRule" id="PRU00114"/>
    </source>
</evidence>
<evidence type="ECO:0000256" key="6">
    <source>
        <dbReference type="SAM" id="MobiDB-lite"/>
    </source>
</evidence>